<feature type="signal peptide" evidence="1">
    <location>
        <begin position="1"/>
        <end position="22"/>
    </location>
</feature>
<feature type="chain" id="PRO_0000365024" description="Uncharacterized lipoprotein YdeJ">
    <location>
        <begin position="23"/>
        <end position="219"/>
    </location>
</feature>
<feature type="region of interest" description="Disordered" evidence="2">
    <location>
        <begin position="26"/>
        <end position="89"/>
    </location>
</feature>
<feature type="compositionally biased region" description="Polar residues" evidence="2">
    <location>
        <begin position="32"/>
        <end position="42"/>
    </location>
</feature>
<feature type="compositionally biased region" description="Basic and acidic residues" evidence="2">
    <location>
        <begin position="43"/>
        <end position="61"/>
    </location>
</feature>
<feature type="lipid moiety-binding region" description="N-palmitoyl cysteine" evidence="1">
    <location>
        <position position="23"/>
    </location>
</feature>
<feature type="lipid moiety-binding region" description="S-diacylglycerol cysteine" evidence="1">
    <location>
        <position position="23"/>
    </location>
</feature>
<dbReference type="EMBL" id="AB001488">
    <property type="protein sequence ID" value="BAA19357.1"/>
    <property type="molecule type" value="Genomic_DNA"/>
</dbReference>
<dbReference type="EMBL" id="AL009126">
    <property type="protein sequence ID" value="CAB12329.1"/>
    <property type="molecule type" value="Genomic_DNA"/>
</dbReference>
<dbReference type="PIR" id="D69778">
    <property type="entry name" value="D69778"/>
</dbReference>
<dbReference type="RefSeq" id="NP_388403.1">
    <property type="nucleotide sequence ID" value="NC_000964.3"/>
</dbReference>
<dbReference type="RefSeq" id="WP_003243990.1">
    <property type="nucleotide sequence ID" value="NZ_OZ025638.1"/>
</dbReference>
<dbReference type="SMR" id="P96667"/>
<dbReference type="FunCoup" id="P96667">
    <property type="interactions" value="62"/>
</dbReference>
<dbReference type="PaxDb" id="224308-BSU05220"/>
<dbReference type="DNASU" id="939910"/>
<dbReference type="EnsemblBacteria" id="CAB12329">
    <property type="protein sequence ID" value="CAB12329"/>
    <property type="gene ID" value="BSU_05220"/>
</dbReference>
<dbReference type="GeneID" id="939910"/>
<dbReference type="KEGG" id="bsu:BSU05220"/>
<dbReference type="PATRIC" id="fig|224308.179.peg.557"/>
<dbReference type="eggNOG" id="ENOG502ZP8Y">
    <property type="taxonomic scope" value="Bacteria"/>
</dbReference>
<dbReference type="InParanoid" id="P96667"/>
<dbReference type="OrthoDB" id="2136654at2"/>
<dbReference type="BioCyc" id="BSUB:BSU05220-MONOMER"/>
<dbReference type="Proteomes" id="UP000001570">
    <property type="component" value="Chromosome"/>
</dbReference>
<dbReference type="GO" id="GO:0005886">
    <property type="term" value="C:plasma membrane"/>
    <property type="evidence" value="ECO:0007669"/>
    <property type="project" value="UniProtKB-SubCell"/>
</dbReference>
<dbReference type="PROSITE" id="PS51257">
    <property type="entry name" value="PROKAR_LIPOPROTEIN"/>
    <property type="match status" value="1"/>
</dbReference>
<accession>P96667</accession>
<accession>Q797I1</accession>
<evidence type="ECO:0000255" key="1">
    <source>
        <dbReference type="PROSITE-ProRule" id="PRU00303"/>
    </source>
</evidence>
<evidence type="ECO:0000256" key="2">
    <source>
        <dbReference type="SAM" id="MobiDB-lite"/>
    </source>
</evidence>
<comment type="subcellular location">
    <subcellularLocation>
        <location evidence="1">Cell membrane</location>
        <topology evidence="1">Lipid-anchor</topology>
    </subcellularLocation>
</comment>
<protein>
    <recommendedName>
        <fullName>Uncharacterized lipoprotein YdeJ</fullName>
    </recommendedName>
</protein>
<name>YDEJ_BACSU</name>
<organism>
    <name type="scientific">Bacillus subtilis (strain 168)</name>
    <dbReference type="NCBI Taxonomy" id="224308"/>
    <lineage>
        <taxon>Bacteria</taxon>
        <taxon>Bacillati</taxon>
        <taxon>Bacillota</taxon>
        <taxon>Bacilli</taxon>
        <taxon>Bacillales</taxon>
        <taxon>Bacillaceae</taxon>
        <taxon>Bacillus</taxon>
    </lineage>
</organism>
<sequence length="219" mass="24355">MKKRRKICYCNTALLLMILLAGCTDSKDGEAQQPSNQASAVQTDEKHTEPEESTKIRKDEAEPITESEESATKAANDTSSAEEKSKEDNVLAAYSSEKIEYARVWLQLGPNQEIDELNVRHIAAGEPINPNDDTSASYPENVTQLAGSRLVDGSVTYHGNGDGTIHVYNVPLRWDSADDIEKGVMREVTESIIKNRKTVYVDTGDDEKIKRLIDIMMIH</sequence>
<reference key="1">
    <citation type="submission" date="1997-03" db="EMBL/GenBank/DDBJ databases">
        <title>A 148 kbp sequence of the region between 35 and 47 degree of the Bacillus subtilis genome.</title>
        <authorList>
            <person name="Kasahara Y."/>
            <person name="Nakai S."/>
            <person name="Lee S."/>
            <person name="Sadaie Y."/>
            <person name="Ogasawara N."/>
        </authorList>
    </citation>
    <scope>NUCLEOTIDE SEQUENCE [GENOMIC DNA]</scope>
    <source>
        <strain>168</strain>
    </source>
</reference>
<reference key="2">
    <citation type="journal article" date="1997" name="Nature">
        <title>The complete genome sequence of the Gram-positive bacterium Bacillus subtilis.</title>
        <authorList>
            <person name="Kunst F."/>
            <person name="Ogasawara N."/>
            <person name="Moszer I."/>
            <person name="Albertini A.M."/>
            <person name="Alloni G."/>
            <person name="Azevedo V."/>
            <person name="Bertero M.G."/>
            <person name="Bessieres P."/>
            <person name="Bolotin A."/>
            <person name="Borchert S."/>
            <person name="Borriss R."/>
            <person name="Boursier L."/>
            <person name="Brans A."/>
            <person name="Braun M."/>
            <person name="Brignell S.C."/>
            <person name="Bron S."/>
            <person name="Brouillet S."/>
            <person name="Bruschi C.V."/>
            <person name="Caldwell B."/>
            <person name="Capuano V."/>
            <person name="Carter N.M."/>
            <person name="Choi S.-K."/>
            <person name="Codani J.-J."/>
            <person name="Connerton I.F."/>
            <person name="Cummings N.J."/>
            <person name="Daniel R.A."/>
            <person name="Denizot F."/>
            <person name="Devine K.M."/>
            <person name="Duesterhoeft A."/>
            <person name="Ehrlich S.D."/>
            <person name="Emmerson P.T."/>
            <person name="Entian K.-D."/>
            <person name="Errington J."/>
            <person name="Fabret C."/>
            <person name="Ferrari E."/>
            <person name="Foulger D."/>
            <person name="Fritz C."/>
            <person name="Fujita M."/>
            <person name="Fujita Y."/>
            <person name="Fuma S."/>
            <person name="Galizzi A."/>
            <person name="Galleron N."/>
            <person name="Ghim S.-Y."/>
            <person name="Glaser P."/>
            <person name="Goffeau A."/>
            <person name="Golightly E.J."/>
            <person name="Grandi G."/>
            <person name="Guiseppi G."/>
            <person name="Guy B.J."/>
            <person name="Haga K."/>
            <person name="Haiech J."/>
            <person name="Harwood C.R."/>
            <person name="Henaut A."/>
            <person name="Hilbert H."/>
            <person name="Holsappel S."/>
            <person name="Hosono S."/>
            <person name="Hullo M.-F."/>
            <person name="Itaya M."/>
            <person name="Jones L.-M."/>
            <person name="Joris B."/>
            <person name="Karamata D."/>
            <person name="Kasahara Y."/>
            <person name="Klaerr-Blanchard M."/>
            <person name="Klein C."/>
            <person name="Kobayashi Y."/>
            <person name="Koetter P."/>
            <person name="Koningstein G."/>
            <person name="Krogh S."/>
            <person name="Kumano M."/>
            <person name="Kurita K."/>
            <person name="Lapidus A."/>
            <person name="Lardinois S."/>
            <person name="Lauber J."/>
            <person name="Lazarevic V."/>
            <person name="Lee S.-M."/>
            <person name="Levine A."/>
            <person name="Liu H."/>
            <person name="Masuda S."/>
            <person name="Mauel C."/>
            <person name="Medigue C."/>
            <person name="Medina N."/>
            <person name="Mellado R.P."/>
            <person name="Mizuno M."/>
            <person name="Moestl D."/>
            <person name="Nakai S."/>
            <person name="Noback M."/>
            <person name="Noone D."/>
            <person name="O'Reilly M."/>
            <person name="Ogawa K."/>
            <person name="Ogiwara A."/>
            <person name="Oudega B."/>
            <person name="Park S.-H."/>
            <person name="Parro V."/>
            <person name="Pohl T.M."/>
            <person name="Portetelle D."/>
            <person name="Porwollik S."/>
            <person name="Prescott A.M."/>
            <person name="Presecan E."/>
            <person name="Pujic P."/>
            <person name="Purnelle B."/>
            <person name="Rapoport G."/>
            <person name="Rey M."/>
            <person name="Reynolds S."/>
            <person name="Rieger M."/>
            <person name="Rivolta C."/>
            <person name="Rocha E."/>
            <person name="Roche B."/>
            <person name="Rose M."/>
            <person name="Sadaie Y."/>
            <person name="Sato T."/>
            <person name="Scanlan E."/>
            <person name="Schleich S."/>
            <person name="Schroeter R."/>
            <person name="Scoffone F."/>
            <person name="Sekiguchi J."/>
            <person name="Sekowska A."/>
            <person name="Seror S.J."/>
            <person name="Serror P."/>
            <person name="Shin B.-S."/>
            <person name="Soldo B."/>
            <person name="Sorokin A."/>
            <person name="Tacconi E."/>
            <person name="Takagi T."/>
            <person name="Takahashi H."/>
            <person name="Takemaru K."/>
            <person name="Takeuchi M."/>
            <person name="Tamakoshi A."/>
            <person name="Tanaka T."/>
            <person name="Terpstra P."/>
            <person name="Tognoni A."/>
            <person name="Tosato V."/>
            <person name="Uchiyama S."/>
            <person name="Vandenbol M."/>
            <person name="Vannier F."/>
            <person name="Vassarotti A."/>
            <person name="Viari A."/>
            <person name="Wambutt R."/>
            <person name="Wedler E."/>
            <person name="Wedler H."/>
            <person name="Weitzenegger T."/>
            <person name="Winters P."/>
            <person name="Wipat A."/>
            <person name="Yamamoto H."/>
            <person name="Yamane K."/>
            <person name="Yasumoto K."/>
            <person name="Yata K."/>
            <person name="Yoshida K."/>
            <person name="Yoshikawa H.-F."/>
            <person name="Zumstein E."/>
            <person name="Yoshikawa H."/>
            <person name="Danchin A."/>
        </authorList>
    </citation>
    <scope>NUCLEOTIDE SEQUENCE [LARGE SCALE GENOMIC DNA]</scope>
    <source>
        <strain>168</strain>
    </source>
</reference>
<keyword id="KW-1003">Cell membrane</keyword>
<keyword id="KW-0449">Lipoprotein</keyword>
<keyword id="KW-0472">Membrane</keyword>
<keyword id="KW-0564">Palmitate</keyword>
<keyword id="KW-1185">Reference proteome</keyword>
<keyword id="KW-0732">Signal</keyword>
<gene>
    <name type="primary">ydeJ</name>
    <name type="ordered locus">BSU05220</name>
</gene>
<proteinExistence type="inferred from homology"/>